<reference key="1">
    <citation type="journal article" date="2004" name="J. Bacteriol.">
        <title>Complete genome sequence of the genetically tractable hydrogenotrophic methanogen Methanococcus maripaludis.</title>
        <authorList>
            <person name="Hendrickson E.L."/>
            <person name="Kaul R."/>
            <person name="Zhou Y."/>
            <person name="Bovee D."/>
            <person name="Chapman P."/>
            <person name="Chung J."/>
            <person name="Conway de Macario E."/>
            <person name="Dodsworth J.A."/>
            <person name="Gillett W."/>
            <person name="Graham D.E."/>
            <person name="Hackett M."/>
            <person name="Haydock A.K."/>
            <person name="Kang A."/>
            <person name="Land M.L."/>
            <person name="Levy R."/>
            <person name="Lie T.J."/>
            <person name="Major T.A."/>
            <person name="Moore B.C."/>
            <person name="Porat I."/>
            <person name="Palmeiri A."/>
            <person name="Rouse G."/>
            <person name="Saenphimmachak C."/>
            <person name="Soell D."/>
            <person name="Van Dien S."/>
            <person name="Wang T."/>
            <person name="Whitman W.B."/>
            <person name="Xia Q."/>
            <person name="Zhang Y."/>
            <person name="Larimer F.W."/>
            <person name="Olson M.V."/>
            <person name="Leigh J.A."/>
        </authorList>
    </citation>
    <scope>NUCLEOTIDE SEQUENCE [LARGE SCALE GENOMIC DNA]</scope>
    <source>
        <strain>DSM 14266 / JCM 13030 / NBRC 101832 / S2 / LL</strain>
    </source>
</reference>
<protein>
    <recommendedName>
        <fullName evidence="1">Thiamine-phosphate synthase</fullName>
        <shortName evidence="1">TP synthase</shortName>
        <shortName evidence="1">TPS</shortName>
        <ecNumber evidence="1">2.5.1.3</ecNumber>
    </recommendedName>
    <alternativeName>
        <fullName evidence="1">Thiamine-phosphate pyrophosphorylase</fullName>
        <shortName evidence="1">TMP pyrophosphorylase</shortName>
        <shortName evidence="1">TMP-PPase</shortName>
    </alternativeName>
</protein>
<feature type="chain" id="PRO_0000157071" description="Thiamine-phosphate synthase">
    <location>
        <begin position="1"/>
        <end position="207"/>
    </location>
</feature>
<feature type="binding site" evidence="1">
    <location>
        <begin position="36"/>
        <end position="40"/>
    </location>
    <ligand>
        <name>4-amino-2-methyl-5-(diphosphooxymethyl)pyrimidine</name>
        <dbReference type="ChEBI" id="CHEBI:57841"/>
    </ligand>
</feature>
<feature type="binding site" evidence="1">
    <location>
        <position position="68"/>
    </location>
    <ligand>
        <name>4-amino-2-methyl-5-(diphosphooxymethyl)pyrimidine</name>
        <dbReference type="ChEBI" id="CHEBI:57841"/>
    </ligand>
</feature>
<feature type="binding site" evidence="1">
    <location>
        <position position="69"/>
    </location>
    <ligand>
        <name>Mg(2+)</name>
        <dbReference type="ChEBI" id="CHEBI:18420"/>
    </ligand>
</feature>
<feature type="binding site" evidence="1">
    <location>
        <position position="88"/>
    </location>
    <ligand>
        <name>Mg(2+)</name>
        <dbReference type="ChEBI" id="CHEBI:18420"/>
    </ligand>
</feature>
<feature type="binding site" evidence="1">
    <location>
        <position position="106"/>
    </location>
    <ligand>
        <name>4-amino-2-methyl-5-(diphosphooxymethyl)pyrimidine</name>
        <dbReference type="ChEBI" id="CHEBI:57841"/>
    </ligand>
</feature>
<feature type="binding site" evidence="1">
    <location>
        <begin position="132"/>
        <end position="134"/>
    </location>
    <ligand>
        <name>2-[(2R,5Z)-2-carboxy-4-methylthiazol-5(2H)-ylidene]ethyl phosphate</name>
        <dbReference type="ChEBI" id="CHEBI:62899"/>
    </ligand>
</feature>
<feature type="binding site" evidence="1">
    <location>
        <position position="135"/>
    </location>
    <ligand>
        <name>4-amino-2-methyl-5-(diphosphooxymethyl)pyrimidine</name>
        <dbReference type="ChEBI" id="CHEBI:57841"/>
    </ligand>
</feature>
<feature type="binding site" evidence="1">
    <location>
        <position position="162"/>
    </location>
    <ligand>
        <name>2-[(2R,5Z)-2-carboxy-4-methylthiazol-5(2H)-ylidene]ethyl phosphate</name>
        <dbReference type="ChEBI" id="CHEBI:62899"/>
    </ligand>
</feature>
<feature type="binding site" evidence="1">
    <location>
        <begin position="182"/>
        <end position="183"/>
    </location>
    <ligand>
        <name>2-[(2R,5Z)-2-carboxy-4-methylthiazol-5(2H)-ylidene]ethyl phosphate</name>
        <dbReference type="ChEBI" id="CHEBI:62899"/>
    </ligand>
</feature>
<proteinExistence type="inferred from homology"/>
<name>THIE_METMP</name>
<accession>P61413</accession>
<organism>
    <name type="scientific">Methanococcus maripaludis (strain DSM 14266 / JCM 13030 / NBRC 101832 / S2 / LL)</name>
    <dbReference type="NCBI Taxonomy" id="267377"/>
    <lineage>
        <taxon>Archaea</taxon>
        <taxon>Methanobacteriati</taxon>
        <taxon>Methanobacteriota</taxon>
        <taxon>Methanomada group</taxon>
        <taxon>Methanococci</taxon>
        <taxon>Methanococcales</taxon>
        <taxon>Methanococcaceae</taxon>
        <taxon>Methanococcus</taxon>
    </lineage>
</organism>
<sequence>MKFKDKLKFYVITDSNYSDEVISVEESLKGGATSIQLRMKTSSTRKMIEVGNKLRKLTSEYDALFFVNDRLDVAQAVNADGIHVGIDDMPVSKIKEIAPNLIIGASAYNLDEMKTAESEGADYLGVGAVYSTNTKLDARDLGINGLKNISKIANLPIVAIGGINHSNVENVLKCGVSGVAVVSAIVGAENILKSAENMNELIKKYIK</sequence>
<evidence type="ECO:0000255" key="1">
    <source>
        <dbReference type="HAMAP-Rule" id="MF_00097"/>
    </source>
</evidence>
<gene>
    <name evidence="1" type="primary">thiE</name>
    <name type="ordered locus">MMP1139</name>
</gene>
<keyword id="KW-0460">Magnesium</keyword>
<keyword id="KW-0479">Metal-binding</keyword>
<keyword id="KW-1185">Reference proteome</keyword>
<keyword id="KW-0784">Thiamine biosynthesis</keyword>
<keyword id="KW-0808">Transferase</keyword>
<comment type="function">
    <text evidence="1">Condenses 4-methyl-5-(beta-hydroxyethyl)thiazole monophosphate (THZ-P) and 2-methyl-4-amino-5-hydroxymethyl pyrimidine pyrophosphate (HMP-PP) to form thiamine monophosphate (TMP).</text>
</comment>
<comment type="catalytic activity">
    <reaction evidence="1">
        <text>2-[(2R,5Z)-2-carboxy-4-methylthiazol-5(2H)-ylidene]ethyl phosphate + 4-amino-2-methyl-5-(diphosphooxymethyl)pyrimidine + 2 H(+) = thiamine phosphate + CO2 + diphosphate</text>
        <dbReference type="Rhea" id="RHEA:47844"/>
        <dbReference type="ChEBI" id="CHEBI:15378"/>
        <dbReference type="ChEBI" id="CHEBI:16526"/>
        <dbReference type="ChEBI" id="CHEBI:33019"/>
        <dbReference type="ChEBI" id="CHEBI:37575"/>
        <dbReference type="ChEBI" id="CHEBI:57841"/>
        <dbReference type="ChEBI" id="CHEBI:62899"/>
        <dbReference type="EC" id="2.5.1.3"/>
    </reaction>
</comment>
<comment type="catalytic activity">
    <reaction evidence="1">
        <text>2-(2-carboxy-4-methylthiazol-5-yl)ethyl phosphate + 4-amino-2-methyl-5-(diphosphooxymethyl)pyrimidine + 2 H(+) = thiamine phosphate + CO2 + diphosphate</text>
        <dbReference type="Rhea" id="RHEA:47848"/>
        <dbReference type="ChEBI" id="CHEBI:15378"/>
        <dbReference type="ChEBI" id="CHEBI:16526"/>
        <dbReference type="ChEBI" id="CHEBI:33019"/>
        <dbReference type="ChEBI" id="CHEBI:37575"/>
        <dbReference type="ChEBI" id="CHEBI:57841"/>
        <dbReference type="ChEBI" id="CHEBI:62890"/>
        <dbReference type="EC" id="2.5.1.3"/>
    </reaction>
</comment>
<comment type="catalytic activity">
    <reaction evidence="1">
        <text>4-methyl-5-(2-phosphooxyethyl)-thiazole + 4-amino-2-methyl-5-(diphosphooxymethyl)pyrimidine + H(+) = thiamine phosphate + diphosphate</text>
        <dbReference type="Rhea" id="RHEA:22328"/>
        <dbReference type="ChEBI" id="CHEBI:15378"/>
        <dbReference type="ChEBI" id="CHEBI:33019"/>
        <dbReference type="ChEBI" id="CHEBI:37575"/>
        <dbReference type="ChEBI" id="CHEBI:57841"/>
        <dbReference type="ChEBI" id="CHEBI:58296"/>
        <dbReference type="EC" id="2.5.1.3"/>
    </reaction>
</comment>
<comment type="cofactor">
    <cofactor evidence="1">
        <name>Mg(2+)</name>
        <dbReference type="ChEBI" id="CHEBI:18420"/>
    </cofactor>
    <text evidence="1">Binds 1 Mg(2+) ion per subunit.</text>
</comment>
<comment type="pathway">
    <text evidence="1">Cofactor biosynthesis; thiamine diphosphate biosynthesis; thiamine phosphate from 4-amino-2-methyl-5-diphosphomethylpyrimidine and 4-methyl-5-(2-phosphoethyl)-thiazole: step 1/1.</text>
</comment>
<comment type="similarity">
    <text evidence="1">Belongs to the thiamine-phosphate synthase family.</text>
</comment>
<dbReference type="EC" id="2.5.1.3" evidence="1"/>
<dbReference type="EMBL" id="BX950229">
    <property type="protein sequence ID" value="CAF30695.1"/>
    <property type="molecule type" value="Genomic_DNA"/>
</dbReference>
<dbReference type="RefSeq" id="WP_011171083.1">
    <property type="nucleotide sequence ID" value="NC_005791.1"/>
</dbReference>
<dbReference type="SMR" id="P61413"/>
<dbReference type="STRING" id="267377.MMP1139"/>
<dbReference type="EnsemblBacteria" id="CAF30695">
    <property type="protein sequence ID" value="CAF30695"/>
    <property type="gene ID" value="MMP1139"/>
</dbReference>
<dbReference type="GeneID" id="2762052"/>
<dbReference type="KEGG" id="mmp:MMP1139"/>
<dbReference type="PATRIC" id="fig|267377.15.peg.1172"/>
<dbReference type="eggNOG" id="arCOG01089">
    <property type="taxonomic scope" value="Archaea"/>
</dbReference>
<dbReference type="HOGENOM" id="CLU_018272_3_2_2"/>
<dbReference type="OrthoDB" id="85572at2157"/>
<dbReference type="UniPathway" id="UPA00060">
    <property type="reaction ID" value="UER00141"/>
</dbReference>
<dbReference type="Proteomes" id="UP000000590">
    <property type="component" value="Chromosome"/>
</dbReference>
<dbReference type="GO" id="GO:0005737">
    <property type="term" value="C:cytoplasm"/>
    <property type="evidence" value="ECO:0007669"/>
    <property type="project" value="TreeGrafter"/>
</dbReference>
<dbReference type="GO" id="GO:0000287">
    <property type="term" value="F:magnesium ion binding"/>
    <property type="evidence" value="ECO:0007669"/>
    <property type="project" value="UniProtKB-UniRule"/>
</dbReference>
<dbReference type="GO" id="GO:0004789">
    <property type="term" value="F:thiamine-phosphate diphosphorylase activity"/>
    <property type="evidence" value="ECO:0007669"/>
    <property type="project" value="UniProtKB-UniRule"/>
</dbReference>
<dbReference type="GO" id="GO:0009228">
    <property type="term" value="P:thiamine biosynthetic process"/>
    <property type="evidence" value="ECO:0007669"/>
    <property type="project" value="UniProtKB-KW"/>
</dbReference>
<dbReference type="GO" id="GO:0009229">
    <property type="term" value="P:thiamine diphosphate biosynthetic process"/>
    <property type="evidence" value="ECO:0007669"/>
    <property type="project" value="UniProtKB-UniRule"/>
</dbReference>
<dbReference type="CDD" id="cd00564">
    <property type="entry name" value="TMP_TenI"/>
    <property type="match status" value="1"/>
</dbReference>
<dbReference type="FunFam" id="3.20.20.70:FF:000096">
    <property type="entry name" value="Thiamine-phosphate synthase"/>
    <property type="match status" value="1"/>
</dbReference>
<dbReference type="Gene3D" id="3.20.20.70">
    <property type="entry name" value="Aldolase class I"/>
    <property type="match status" value="1"/>
</dbReference>
<dbReference type="HAMAP" id="MF_00097">
    <property type="entry name" value="TMP_synthase"/>
    <property type="match status" value="1"/>
</dbReference>
<dbReference type="InterPro" id="IPR013785">
    <property type="entry name" value="Aldolase_TIM"/>
</dbReference>
<dbReference type="InterPro" id="IPR036206">
    <property type="entry name" value="ThiamineP_synth_sf"/>
</dbReference>
<dbReference type="InterPro" id="IPR022998">
    <property type="entry name" value="ThiamineP_synth_TenI"/>
</dbReference>
<dbReference type="InterPro" id="IPR034291">
    <property type="entry name" value="TMP_synthase"/>
</dbReference>
<dbReference type="NCBIfam" id="TIGR00693">
    <property type="entry name" value="thiE"/>
    <property type="match status" value="1"/>
</dbReference>
<dbReference type="PANTHER" id="PTHR20857:SF23">
    <property type="entry name" value="THIAMINE BIOSYNTHETIC BIFUNCTIONAL ENZYME"/>
    <property type="match status" value="1"/>
</dbReference>
<dbReference type="PANTHER" id="PTHR20857">
    <property type="entry name" value="THIAMINE-PHOSPHATE PYROPHOSPHORYLASE"/>
    <property type="match status" value="1"/>
</dbReference>
<dbReference type="Pfam" id="PF02581">
    <property type="entry name" value="TMP-TENI"/>
    <property type="match status" value="1"/>
</dbReference>
<dbReference type="SUPFAM" id="SSF51391">
    <property type="entry name" value="Thiamin phosphate synthase"/>
    <property type="match status" value="1"/>
</dbReference>